<reference key="1">
    <citation type="submission" date="2006-12" db="EMBL/GenBank/DDBJ databases">
        <authorList>
            <person name="Fouts D.E."/>
            <person name="Nelson K.E."/>
            <person name="Sebastian Y."/>
        </authorList>
    </citation>
    <scope>NUCLEOTIDE SEQUENCE [LARGE SCALE GENOMIC DNA]</scope>
    <source>
        <strain>81-176</strain>
    </source>
</reference>
<dbReference type="EC" id="5.2.1.8" evidence="1"/>
<dbReference type="EMBL" id="CP000538">
    <property type="protein sequence ID" value="EAQ73279.1"/>
    <property type="molecule type" value="Genomic_DNA"/>
</dbReference>
<dbReference type="RefSeq" id="WP_002869063.1">
    <property type="nucleotide sequence ID" value="NC_008787.1"/>
</dbReference>
<dbReference type="SMR" id="A1VXS1"/>
<dbReference type="KEGG" id="cjj:CJJ81176_0224"/>
<dbReference type="eggNOG" id="COG0544">
    <property type="taxonomic scope" value="Bacteria"/>
</dbReference>
<dbReference type="HOGENOM" id="CLU_033058_2_2_7"/>
<dbReference type="Proteomes" id="UP000000646">
    <property type="component" value="Chromosome"/>
</dbReference>
<dbReference type="GO" id="GO:0005737">
    <property type="term" value="C:cytoplasm"/>
    <property type="evidence" value="ECO:0007669"/>
    <property type="project" value="UniProtKB-SubCell"/>
</dbReference>
<dbReference type="GO" id="GO:0003755">
    <property type="term" value="F:peptidyl-prolyl cis-trans isomerase activity"/>
    <property type="evidence" value="ECO:0007669"/>
    <property type="project" value="UniProtKB-UniRule"/>
</dbReference>
<dbReference type="GO" id="GO:0051301">
    <property type="term" value="P:cell division"/>
    <property type="evidence" value="ECO:0007669"/>
    <property type="project" value="UniProtKB-KW"/>
</dbReference>
<dbReference type="GO" id="GO:0006457">
    <property type="term" value="P:protein folding"/>
    <property type="evidence" value="ECO:0007669"/>
    <property type="project" value="UniProtKB-UniRule"/>
</dbReference>
<dbReference type="GO" id="GO:0015031">
    <property type="term" value="P:protein transport"/>
    <property type="evidence" value="ECO:0007669"/>
    <property type="project" value="UniProtKB-UniRule"/>
</dbReference>
<dbReference type="FunFam" id="3.10.50.40:FF:000001">
    <property type="entry name" value="Trigger factor"/>
    <property type="match status" value="1"/>
</dbReference>
<dbReference type="Gene3D" id="3.10.50.40">
    <property type="match status" value="1"/>
</dbReference>
<dbReference type="Gene3D" id="3.30.70.1050">
    <property type="entry name" value="Trigger factor ribosome-binding domain"/>
    <property type="match status" value="1"/>
</dbReference>
<dbReference type="Gene3D" id="1.10.3120.10">
    <property type="entry name" value="Trigger factor, C-terminal domain"/>
    <property type="match status" value="1"/>
</dbReference>
<dbReference type="HAMAP" id="MF_00303">
    <property type="entry name" value="Trigger_factor_Tig"/>
    <property type="match status" value="1"/>
</dbReference>
<dbReference type="InterPro" id="IPR046357">
    <property type="entry name" value="PPIase_dom_sf"/>
</dbReference>
<dbReference type="InterPro" id="IPR001179">
    <property type="entry name" value="PPIase_FKBP_dom"/>
</dbReference>
<dbReference type="InterPro" id="IPR005215">
    <property type="entry name" value="Trig_fac"/>
</dbReference>
<dbReference type="InterPro" id="IPR008880">
    <property type="entry name" value="Trigger_fac_C"/>
</dbReference>
<dbReference type="InterPro" id="IPR037041">
    <property type="entry name" value="Trigger_fac_C_sf"/>
</dbReference>
<dbReference type="InterPro" id="IPR008881">
    <property type="entry name" value="Trigger_fac_ribosome-bd_bac"/>
</dbReference>
<dbReference type="InterPro" id="IPR036611">
    <property type="entry name" value="Trigger_fac_ribosome-bd_sf"/>
</dbReference>
<dbReference type="InterPro" id="IPR027304">
    <property type="entry name" value="Trigger_fact/SurA_dom_sf"/>
</dbReference>
<dbReference type="NCBIfam" id="TIGR00115">
    <property type="entry name" value="tig"/>
    <property type="match status" value="1"/>
</dbReference>
<dbReference type="Pfam" id="PF00254">
    <property type="entry name" value="FKBP_C"/>
    <property type="match status" value="1"/>
</dbReference>
<dbReference type="Pfam" id="PF05698">
    <property type="entry name" value="Trigger_C"/>
    <property type="match status" value="1"/>
</dbReference>
<dbReference type="Pfam" id="PF05697">
    <property type="entry name" value="Trigger_N"/>
    <property type="match status" value="1"/>
</dbReference>
<dbReference type="PIRSF" id="PIRSF003095">
    <property type="entry name" value="Trigger_factor"/>
    <property type="match status" value="1"/>
</dbReference>
<dbReference type="SUPFAM" id="SSF54534">
    <property type="entry name" value="FKBP-like"/>
    <property type="match status" value="1"/>
</dbReference>
<dbReference type="SUPFAM" id="SSF109998">
    <property type="entry name" value="Triger factor/SurA peptide-binding domain-like"/>
    <property type="match status" value="1"/>
</dbReference>
<dbReference type="SUPFAM" id="SSF102735">
    <property type="entry name" value="Trigger factor ribosome-binding domain"/>
    <property type="match status" value="1"/>
</dbReference>
<dbReference type="PROSITE" id="PS50059">
    <property type="entry name" value="FKBP_PPIASE"/>
    <property type="match status" value="1"/>
</dbReference>
<evidence type="ECO:0000255" key="1">
    <source>
        <dbReference type="HAMAP-Rule" id="MF_00303"/>
    </source>
</evidence>
<comment type="function">
    <text evidence="1">Involved in protein export. Acts as a chaperone by maintaining the newly synthesized protein in an open conformation. Functions as a peptidyl-prolyl cis-trans isomerase.</text>
</comment>
<comment type="catalytic activity">
    <reaction evidence="1">
        <text>[protein]-peptidylproline (omega=180) = [protein]-peptidylproline (omega=0)</text>
        <dbReference type="Rhea" id="RHEA:16237"/>
        <dbReference type="Rhea" id="RHEA-COMP:10747"/>
        <dbReference type="Rhea" id="RHEA-COMP:10748"/>
        <dbReference type="ChEBI" id="CHEBI:83833"/>
        <dbReference type="ChEBI" id="CHEBI:83834"/>
        <dbReference type="EC" id="5.2.1.8"/>
    </reaction>
</comment>
<comment type="subcellular location">
    <subcellularLocation>
        <location>Cytoplasm</location>
    </subcellularLocation>
    <text evidence="1">About half TF is bound to the ribosome near the polypeptide exit tunnel while the other half is free in the cytoplasm.</text>
</comment>
<comment type="domain">
    <text evidence="1">Consists of 3 domains; the N-terminus binds the ribosome, the middle domain has PPIase activity, while the C-terminus has intrinsic chaperone activity on its own.</text>
</comment>
<comment type="similarity">
    <text evidence="1">Belongs to the FKBP-type PPIase family. Tig subfamily.</text>
</comment>
<protein>
    <recommendedName>
        <fullName evidence="1">Trigger factor</fullName>
        <shortName evidence="1">TF</shortName>
        <ecNumber evidence="1">5.2.1.8</ecNumber>
    </recommendedName>
    <alternativeName>
        <fullName evidence="1">PPIase</fullName>
    </alternativeName>
</protein>
<keyword id="KW-0131">Cell cycle</keyword>
<keyword id="KW-0132">Cell division</keyword>
<keyword id="KW-0143">Chaperone</keyword>
<keyword id="KW-0963">Cytoplasm</keyword>
<keyword id="KW-0413">Isomerase</keyword>
<keyword id="KW-0697">Rotamase</keyword>
<feature type="chain" id="PRO_1000022664" description="Trigger factor">
    <location>
        <begin position="1"/>
        <end position="444"/>
    </location>
</feature>
<feature type="domain" description="PPIase FKBP-type" evidence="1">
    <location>
        <begin position="165"/>
        <end position="250"/>
    </location>
</feature>
<gene>
    <name evidence="1" type="primary">tig</name>
    <name type="ordered locus">CJJ81176_0224</name>
</gene>
<name>TIG_CAMJJ</name>
<sequence length="444" mass="51018">MEVKAKQLDSVNATASVKIPSGMIKSEVENLAKKASKSVKMDGFRPGKVPVSAVLKRYERELTQDAEQNLFKSAVNSALQELKKESKELVGEPYFEKFDRKDGEIIAELILSFKPEIKLDGYEKLIPEYQTPKVNKKEIDEKKDELLKRFSTPEAIKTKRALKEGDFAKFDFEGFVDDKAFEGGKAENYVLEIGSKQFIPGFEDGMVGMKIGEEKDIKVTFPKEYGAAHLADKDAVFKVKLHEIQELKIPELDDEMLKKLLPGEEKASVEVLDEKLKEQIKNEKLFKLVNDELKGKFADALIEKYNFDLPKGIVEQETDMQMRAAFNTFSEKEIEELKASKEKYQEKRDSFKEEAQKSVKLTFIIDELAKLRKIEVNDQELIQAIYFEAYRYGMNPKEHLENYKKQGALPAVKMALIEEKLFNDIFMPKTEKSEKASKKEKEDK</sequence>
<organism>
    <name type="scientific">Campylobacter jejuni subsp. jejuni serotype O:23/36 (strain 81-176)</name>
    <dbReference type="NCBI Taxonomy" id="354242"/>
    <lineage>
        <taxon>Bacteria</taxon>
        <taxon>Pseudomonadati</taxon>
        <taxon>Campylobacterota</taxon>
        <taxon>Epsilonproteobacteria</taxon>
        <taxon>Campylobacterales</taxon>
        <taxon>Campylobacteraceae</taxon>
        <taxon>Campylobacter</taxon>
    </lineage>
</organism>
<accession>A1VXS1</accession>
<proteinExistence type="inferred from homology"/>